<comment type="function">
    <text evidence="1">Catalyzes the last two sequential reactions in the de novo biosynthetic pathway for UDP-N-acetylglucosamine (UDP-GlcNAc). The C-terminal domain catalyzes the transfer of acetyl group from acetyl coenzyme A to glucosamine-1-phosphate (GlcN-1-P) to produce N-acetylglucosamine-1-phosphate (GlcNAc-1-P), which is converted into UDP-GlcNAc by the transfer of uridine 5-monophosphate (from uridine 5-triphosphate), a reaction catalyzed by the N-terminal domain.</text>
</comment>
<comment type="catalytic activity">
    <reaction evidence="1">
        <text>alpha-D-glucosamine 1-phosphate + acetyl-CoA = N-acetyl-alpha-D-glucosamine 1-phosphate + CoA + H(+)</text>
        <dbReference type="Rhea" id="RHEA:13725"/>
        <dbReference type="ChEBI" id="CHEBI:15378"/>
        <dbReference type="ChEBI" id="CHEBI:57287"/>
        <dbReference type="ChEBI" id="CHEBI:57288"/>
        <dbReference type="ChEBI" id="CHEBI:57776"/>
        <dbReference type="ChEBI" id="CHEBI:58516"/>
        <dbReference type="EC" id="2.3.1.157"/>
    </reaction>
</comment>
<comment type="catalytic activity">
    <reaction evidence="1">
        <text>N-acetyl-alpha-D-glucosamine 1-phosphate + UTP + H(+) = UDP-N-acetyl-alpha-D-glucosamine + diphosphate</text>
        <dbReference type="Rhea" id="RHEA:13509"/>
        <dbReference type="ChEBI" id="CHEBI:15378"/>
        <dbReference type="ChEBI" id="CHEBI:33019"/>
        <dbReference type="ChEBI" id="CHEBI:46398"/>
        <dbReference type="ChEBI" id="CHEBI:57705"/>
        <dbReference type="ChEBI" id="CHEBI:57776"/>
        <dbReference type="EC" id="2.7.7.23"/>
    </reaction>
</comment>
<comment type="cofactor">
    <cofactor evidence="1">
        <name>Mg(2+)</name>
        <dbReference type="ChEBI" id="CHEBI:18420"/>
    </cofactor>
    <text evidence="1">Binds 1 Mg(2+) ion per subunit.</text>
</comment>
<comment type="pathway">
    <text evidence="1">Nucleotide-sugar biosynthesis; UDP-N-acetyl-alpha-D-glucosamine biosynthesis; N-acetyl-alpha-D-glucosamine 1-phosphate from alpha-D-glucosamine 6-phosphate (route II): step 2/2.</text>
</comment>
<comment type="pathway">
    <text evidence="1">Nucleotide-sugar biosynthesis; UDP-N-acetyl-alpha-D-glucosamine biosynthesis; UDP-N-acetyl-alpha-D-glucosamine from N-acetyl-alpha-D-glucosamine 1-phosphate: step 1/1.</text>
</comment>
<comment type="pathway">
    <text evidence="1">Bacterial outer membrane biogenesis; LPS lipid A biosynthesis.</text>
</comment>
<comment type="subunit">
    <text evidence="1">Homotrimer.</text>
</comment>
<comment type="subcellular location">
    <subcellularLocation>
        <location evidence="1">Cytoplasm</location>
    </subcellularLocation>
</comment>
<comment type="similarity">
    <text evidence="1">In the N-terminal section; belongs to the N-acetylglucosamine-1-phosphate uridyltransferase family.</text>
</comment>
<comment type="similarity">
    <text evidence="1">In the C-terminal section; belongs to the transferase hexapeptide repeat family.</text>
</comment>
<name>GLMU_GLUDA</name>
<organism>
    <name type="scientific">Gluconacetobacter diazotrophicus (strain ATCC 49037 / DSM 5601 / CCUG 37298 / CIP 103539 / LMG 7603 / PAl5)</name>
    <dbReference type="NCBI Taxonomy" id="272568"/>
    <lineage>
        <taxon>Bacteria</taxon>
        <taxon>Pseudomonadati</taxon>
        <taxon>Pseudomonadota</taxon>
        <taxon>Alphaproteobacteria</taxon>
        <taxon>Acetobacterales</taxon>
        <taxon>Acetobacteraceae</taxon>
        <taxon>Gluconacetobacter</taxon>
    </lineage>
</organism>
<keyword id="KW-0012">Acyltransferase</keyword>
<keyword id="KW-0133">Cell shape</keyword>
<keyword id="KW-0961">Cell wall biogenesis/degradation</keyword>
<keyword id="KW-0963">Cytoplasm</keyword>
<keyword id="KW-0460">Magnesium</keyword>
<keyword id="KW-0479">Metal-binding</keyword>
<keyword id="KW-0511">Multifunctional enzyme</keyword>
<keyword id="KW-0548">Nucleotidyltransferase</keyword>
<keyword id="KW-0573">Peptidoglycan synthesis</keyword>
<keyword id="KW-1185">Reference proteome</keyword>
<keyword id="KW-0677">Repeat</keyword>
<keyword id="KW-0808">Transferase</keyword>
<accession>A9HI46</accession>
<accession>B5ZJ31</accession>
<gene>
    <name evidence="1" type="primary">glmU</name>
    <name type="ordered locus">GDI1777</name>
    <name type="ordered locus">Gdia_0007</name>
</gene>
<dbReference type="EC" id="2.7.7.23" evidence="1"/>
<dbReference type="EC" id="2.3.1.157" evidence="1"/>
<dbReference type="EMBL" id="AM889285">
    <property type="protein sequence ID" value="CAP55720.1"/>
    <property type="molecule type" value="Genomic_DNA"/>
</dbReference>
<dbReference type="EMBL" id="CP001189">
    <property type="protein sequence ID" value="ACI49809.1"/>
    <property type="molecule type" value="Genomic_DNA"/>
</dbReference>
<dbReference type="RefSeq" id="WP_012225288.1">
    <property type="nucleotide sequence ID" value="NC_010125.1"/>
</dbReference>
<dbReference type="RefSeq" id="WP_012552922.1">
    <property type="nucleotide sequence ID" value="NC_011365.1"/>
</dbReference>
<dbReference type="SMR" id="A9HI46"/>
<dbReference type="STRING" id="272568.GDI1777"/>
<dbReference type="KEGG" id="gdi:GDI1777"/>
<dbReference type="KEGG" id="gdj:Gdia_0007"/>
<dbReference type="eggNOG" id="COG1207">
    <property type="taxonomic scope" value="Bacteria"/>
</dbReference>
<dbReference type="HOGENOM" id="CLU_029499_15_2_5"/>
<dbReference type="OrthoDB" id="9775031at2"/>
<dbReference type="UniPathway" id="UPA00113">
    <property type="reaction ID" value="UER00532"/>
</dbReference>
<dbReference type="UniPathway" id="UPA00113">
    <property type="reaction ID" value="UER00533"/>
</dbReference>
<dbReference type="UniPathway" id="UPA00973"/>
<dbReference type="Proteomes" id="UP000001176">
    <property type="component" value="Chromosome"/>
</dbReference>
<dbReference type="GO" id="GO:0005737">
    <property type="term" value="C:cytoplasm"/>
    <property type="evidence" value="ECO:0007669"/>
    <property type="project" value="UniProtKB-SubCell"/>
</dbReference>
<dbReference type="GO" id="GO:0016020">
    <property type="term" value="C:membrane"/>
    <property type="evidence" value="ECO:0007669"/>
    <property type="project" value="GOC"/>
</dbReference>
<dbReference type="GO" id="GO:0019134">
    <property type="term" value="F:glucosamine-1-phosphate N-acetyltransferase activity"/>
    <property type="evidence" value="ECO:0007669"/>
    <property type="project" value="UniProtKB-UniRule"/>
</dbReference>
<dbReference type="GO" id="GO:0000287">
    <property type="term" value="F:magnesium ion binding"/>
    <property type="evidence" value="ECO:0007669"/>
    <property type="project" value="UniProtKB-UniRule"/>
</dbReference>
<dbReference type="GO" id="GO:0003977">
    <property type="term" value="F:UDP-N-acetylglucosamine diphosphorylase activity"/>
    <property type="evidence" value="ECO:0007669"/>
    <property type="project" value="UniProtKB-UniRule"/>
</dbReference>
<dbReference type="GO" id="GO:0000902">
    <property type="term" value="P:cell morphogenesis"/>
    <property type="evidence" value="ECO:0007669"/>
    <property type="project" value="UniProtKB-UniRule"/>
</dbReference>
<dbReference type="GO" id="GO:0071555">
    <property type="term" value="P:cell wall organization"/>
    <property type="evidence" value="ECO:0007669"/>
    <property type="project" value="UniProtKB-KW"/>
</dbReference>
<dbReference type="GO" id="GO:0009245">
    <property type="term" value="P:lipid A biosynthetic process"/>
    <property type="evidence" value="ECO:0007669"/>
    <property type="project" value="UniProtKB-UniRule"/>
</dbReference>
<dbReference type="GO" id="GO:0009252">
    <property type="term" value="P:peptidoglycan biosynthetic process"/>
    <property type="evidence" value="ECO:0007669"/>
    <property type="project" value="UniProtKB-UniRule"/>
</dbReference>
<dbReference type="GO" id="GO:0008360">
    <property type="term" value="P:regulation of cell shape"/>
    <property type="evidence" value="ECO:0007669"/>
    <property type="project" value="UniProtKB-KW"/>
</dbReference>
<dbReference type="GO" id="GO:0006048">
    <property type="term" value="P:UDP-N-acetylglucosamine biosynthetic process"/>
    <property type="evidence" value="ECO:0007669"/>
    <property type="project" value="UniProtKB-UniPathway"/>
</dbReference>
<dbReference type="CDD" id="cd02540">
    <property type="entry name" value="GT2_GlmU_N_bac"/>
    <property type="match status" value="1"/>
</dbReference>
<dbReference type="CDD" id="cd03353">
    <property type="entry name" value="LbH_GlmU_C"/>
    <property type="match status" value="1"/>
</dbReference>
<dbReference type="Gene3D" id="2.160.10.10">
    <property type="entry name" value="Hexapeptide repeat proteins"/>
    <property type="match status" value="1"/>
</dbReference>
<dbReference type="Gene3D" id="3.90.550.10">
    <property type="entry name" value="Spore Coat Polysaccharide Biosynthesis Protein SpsA, Chain A"/>
    <property type="match status" value="1"/>
</dbReference>
<dbReference type="HAMAP" id="MF_01631">
    <property type="entry name" value="GlmU"/>
    <property type="match status" value="1"/>
</dbReference>
<dbReference type="InterPro" id="IPR005882">
    <property type="entry name" value="Bifunctional_GlmU"/>
</dbReference>
<dbReference type="InterPro" id="IPR050065">
    <property type="entry name" value="GlmU-like"/>
</dbReference>
<dbReference type="InterPro" id="IPR038009">
    <property type="entry name" value="GlmU_C_LbH"/>
</dbReference>
<dbReference type="InterPro" id="IPR001451">
    <property type="entry name" value="Hexapep"/>
</dbReference>
<dbReference type="InterPro" id="IPR018357">
    <property type="entry name" value="Hexapep_transf_CS"/>
</dbReference>
<dbReference type="InterPro" id="IPR025877">
    <property type="entry name" value="MobA-like_NTP_Trfase"/>
</dbReference>
<dbReference type="InterPro" id="IPR029044">
    <property type="entry name" value="Nucleotide-diphossugar_trans"/>
</dbReference>
<dbReference type="InterPro" id="IPR011004">
    <property type="entry name" value="Trimer_LpxA-like_sf"/>
</dbReference>
<dbReference type="NCBIfam" id="TIGR01173">
    <property type="entry name" value="glmU"/>
    <property type="match status" value="1"/>
</dbReference>
<dbReference type="NCBIfam" id="NF010933">
    <property type="entry name" value="PRK14353.1"/>
    <property type="match status" value="1"/>
</dbReference>
<dbReference type="PANTHER" id="PTHR43584:SF3">
    <property type="entry name" value="BIFUNCTIONAL PROTEIN GLMU"/>
    <property type="match status" value="1"/>
</dbReference>
<dbReference type="PANTHER" id="PTHR43584">
    <property type="entry name" value="NUCLEOTIDYL TRANSFERASE"/>
    <property type="match status" value="1"/>
</dbReference>
<dbReference type="Pfam" id="PF14602">
    <property type="entry name" value="Hexapep_2"/>
    <property type="match status" value="1"/>
</dbReference>
<dbReference type="Pfam" id="PF12804">
    <property type="entry name" value="NTP_transf_3"/>
    <property type="match status" value="1"/>
</dbReference>
<dbReference type="SUPFAM" id="SSF53448">
    <property type="entry name" value="Nucleotide-diphospho-sugar transferases"/>
    <property type="match status" value="1"/>
</dbReference>
<dbReference type="SUPFAM" id="SSF51161">
    <property type="entry name" value="Trimeric LpxA-like enzymes"/>
    <property type="match status" value="1"/>
</dbReference>
<dbReference type="PROSITE" id="PS00101">
    <property type="entry name" value="HEXAPEP_TRANSFERASES"/>
    <property type="match status" value="1"/>
</dbReference>
<sequence>MNATVPSAAPADLPAHRPATAVILAAGMGTRMKSDRPKVMHPLAGQPMLRYLLDNAASVFDRIVVVVGPGMEQVAALAAPHAVVVQQDRLGTAHAAAQAADLFGTGDVAVLYGDNPLITADSMRRMLACRAGEGNSEGAGLALMAMRPRDPGRYGRVVTQDGLVRRIVEWADASDEERAITLCNAGVLCAGAEDFRRWLGAVRNDNAQGEYYLGDVVAMAVAEGRQVRAVEAPEDELRGINSRAELAEAEACVQRRLRAAALDGGATLVAPETVFLAADTVLEPDVLVQPHVVFGPGVTVRRGAEIRAFSHLEGCVVGPGALIGPYARLRPGSDVGAAAHVGNFVELKATTLGAGAKANHLSYLGDATIGPATNIGAGTITCNYDGVFKHRTDIGAGCFVGSNAILVAPVSIGDGALVAAGSVITQDVLPDAMALGRARQTNKDGRGASLQAALRRKKEQG</sequence>
<protein>
    <recommendedName>
        <fullName evidence="1">Bifunctional protein GlmU</fullName>
    </recommendedName>
    <domain>
        <recommendedName>
            <fullName evidence="1">UDP-N-acetylglucosamine pyrophosphorylase</fullName>
            <ecNumber evidence="1">2.7.7.23</ecNumber>
        </recommendedName>
        <alternativeName>
            <fullName evidence="1">N-acetylglucosamine-1-phosphate uridyltransferase</fullName>
        </alternativeName>
    </domain>
    <domain>
        <recommendedName>
            <fullName evidence="1">Glucosamine-1-phosphate N-acetyltransferase</fullName>
            <ecNumber evidence="1">2.3.1.157</ecNumber>
        </recommendedName>
    </domain>
</protein>
<proteinExistence type="inferred from homology"/>
<evidence type="ECO:0000255" key="1">
    <source>
        <dbReference type="HAMAP-Rule" id="MF_01631"/>
    </source>
</evidence>
<evidence type="ECO:0000305" key="2"/>
<reference key="1">
    <citation type="journal article" date="2009" name="BMC Genomics">
        <title>Complete genome sequence of the sugarcane nitrogen-fixing endophyte Gluconacetobacter diazotrophicus Pal5.</title>
        <authorList>
            <person name="Bertalan M."/>
            <person name="Albano R."/>
            <person name="de Padua V."/>
            <person name="Rouws L."/>
            <person name="Rojas C."/>
            <person name="Hemerly A."/>
            <person name="Teixeira K."/>
            <person name="Schwab S."/>
            <person name="Araujo J."/>
            <person name="Oliveira A."/>
            <person name="Franca L."/>
            <person name="Magalhaes V."/>
            <person name="Alqueres S."/>
            <person name="Cardoso A."/>
            <person name="Almeida W."/>
            <person name="Loureiro M.M."/>
            <person name="Nogueira E."/>
            <person name="Cidade D."/>
            <person name="Oliveira D."/>
            <person name="Simao T."/>
            <person name="Macedo J."/>
            <person name="Valadao A."/>
            <person name="Dreschsel M."/>
            <person name="Freitas F."/>
            <person name="Vidal M."/>
            <person name="Guedes H."/>
            <person name="Rodrigues E."/>
            <person name="Meneses C."/>
            <person name="Brioso P."/>
            <person name="Pozzer L."/>
            <person name="Figueiredo D."/>
            <person name="Montano H."/>
            <person name="Junior J."/>
            <person name="de Souza Filho G."/>
            <person name="Martin Quintana Flores V."/>
            <person name="Ferreira B."/>
            <person name="Branco A."/>
            <person name="Gonzalez P."/>
            <person name="Guillobel H."/>
            <person name="Lemos M."/>
            <person name="Seibel L."/>
            <person name="Macedo J."/>
            <person name="Alves-Ferreira M."/>
            <person name="Sachetto-Martins G."/>
            <person name="Coelho A."/>
            <person name="Santos E."/>
            <person name="Amaral G."/>
            <person name="Neves A."/>
            <person name="Pacheco A.B."/>
            <person name="Carvalho D."/>
            <person name="Lery L."/>
            <person name="Bisch P."/>
            <person name="Rossle S.C."/>
            <person name="Urmenyi T."/>
            <person name="Rael Pereira A."/>
            <person name="Silva R."/>
            <person name="Rondinelli E."/>
            <person name="von Kruger W."/>
            <person name="Martins O."/>
            <person name="Baldani J.I."/>
            <person name="Ferreira P.C."/>
        </authorList>
    </citation>
    <scope>NUCLEOTIDE SEQUENCE [LARGE SCALE GENOMIC DNA]</scope>
    <source>
        <strain>ATCC 49037 / DSM 5601 / CCUG 37298 / CIP 103539 / LMG 7603 / PAl5</strain>
    </source>
</reference>
<reference key="2">
    <citation type="journal article" date="2010" name="Stand. Genomic Sci.">
        <title>Two genome sequences of the same bacterial strain, Gluconacetobacter diazotrophicus PAl 5, suggest a new standard in genome sequence submission.</title>
        <authorList>
            <person name="Giongo A."/>
            <person name="Tyler H.L."/>
            <person name="Zipperer U.N."/>
            <person name="Triplett E.W."/>
        </authorList>
    </citation>
    <scope>NUCLEOTIDE SEQUENCE [LARGE SCALE GENOMIC DNA]</scope>
    <source>
        <strain>ATCC 49037 / DSM 5601 / CCUG 37298 / CIP 103539 / LMG 7603 / PAl5</strain>
    </source>
</reference>
<feature type="chain" id="PRO_0000337722" description="Bifunctional protein GlmU">
    <location>
        <begin position="1"/>
        <end position="461"/>
    </location>
</feature>
<feature type="region of interest" description="Pyrophosphorylase" evidence="1">
    <location>
        <begin position="1"/>
        <end position="243"/>
    </location>
</feature>
<feature type="region of interest" description="Linker" evidence="1">
    <location>
        <begin position="244"/>
        <end position="264"/>
    </location>
</feature>
<feature type="region of interest" description="N-acetyltransferase" evidence="1">
    <location>
        <begin position="265"/>
        <end position="461"/>
    </location>
</feature>
<feature type="active site" description="Proton acceptor" evidence="1">
    <location>
        <position position="360"/>
    </location>
</feature>
<feature type="binding site" evidence="1">
    <location>
        <begin position="24"/>
        <end position="27"/>
    </location>
    <ligand>
        <name>UDP-N-acetyl-alpha-D-glucosamine</name>
        <dbReference type="ChEBI" id="CHEBI:57705"/>
    </ligand>
</feature>
<feature type="binding site" evidence="1">
    <location>
        <position position="38"/>
    </location>
    <ligand>
        <name>UDP-N-acetyl-alpha-D-glucosamine</name>
        <dbReference type="ChEBI" id="CHEBI:57705"/>
    </ligand>
</feature>
<feature type="binding site" evidence="1">
    <location>
        <position position="86"/>
    </location>
    <ligand>
        <name>UDP-N-acetyl-alpha-D-glucosamine</name>
        <dbReference type="ChEBI" id="CHEBI:57705"/>
    </ligand>
</feature>
<feature type="binding site" evidence="1">
    <location>
        <begin position="91"/>
        <end position="92"/>
    </location>
    <ligand>
        <name>UDP-N-acetyl-alpha-D-glucosamine</name>
        <dbReference type="ChEBI" id="CHEBI:57705"/>
    </ligand>
</feature>
<feature type="binding site" evidence="1">
    <location>
        <begin position="112"/>
        <end position="114"/>
    </location>
    <ligand>
        <name>UDP-N-acetyl-alpha-D-glucosamine</name>
        <dbReference type="ChEBI" id="CHEBI:57705"/>
    </ligand>
</feature>
<feature type="binding site" evidence="1">
    <location>
        <position position="114"/>
    </location>
    <ligand>
        <name>Mg(2+)</name>
        <dbReference type="ChEBI" id="CHEBI:18420"/>
    </ligand>
</feature>
<feature type="binding site" evidence="1">
    <location>
        <position position="155"/>
    </location>
    <ligand>
        <name>UDP-N-acetyl-alpha-D-glucosamine</name>
        <dbReference type="ChEBI" id="CHEBI:57705"/>
    </ligand>
</feature>
<feature type="binding site" evidence="1">
    <location>
        <position position="169"/>
    </location>
    <ligand>
        <name>UDP-N-acetyl-alpha-D-glucosamine</name>
        <dbReference type="ChEBI" id="CHEBI:57705"/>
    </ligand>
</feature>
<feature type="binding site" evidence="1">
    <location>
        <position position="184"/>
    </location>
    <ligand>
        <name>UDP-N-acetyl-alpha-D-glucosamine</name>
        <dbReference type="ChEBI" id="CHEBI:57705"/>
    </ligand>
</feature>
<feature type="binding site" evidence="1">
    <location>
        <position position="241"/>
    </location>
    <ligand>
        <name>Mg(2+)</name>
        <dbReference type="ChEBI" id="CHEBI:18420"/>
    </ligand>
</feature>
<feature type="binding site" evidence="1">
    <location>
        <position position="241"/>
    </location>
    <ligand>
        <name>UDP-N-acetyl-alpha-D-glucosamine</name>
        <dbReference type="ChEBI" id="CHEBI:57705"/>
    </ligand>
</feature>
<feature type="binding site" evidence="1">
    <location>
        <position position="330"/>
    </location>
    <ligand>
        <name>UDP-N-acetyl-alpha-D-glucosamine</name>
        <dbReference type="ChEBI" id="CHEBI:57705"/>
    </ligand>
</feature>
<feature type="binding site" evidence="1">
    <location>
        <position position="348"/>
    </location>
    <ligand>
        <name>UDP-N-acetyl-alpha-D-glucosamine</name>
        <dbReference type="ChEBI" id="CHEBI:57705"/>
    </ligand>
</feature>
<feature type="binding site" evidence="1">
    <location>
        <position position="363"/>
    </location>
    <ligand>
        <name>UDP-N-acetyl-alpha-D-glucosamine</name>
        <dbReference type="ChEBI" id="CHEBI:57705"/>
    </ligand>
</feature>
<feature type="binding site" evidence="1">
    <location>
        <position position="374"/>
    </location>
    <ligand>
        <name>UDP-N-acetyl-alpha-D-glucosamine</name>
        <dbReference type="ChEBI" id="CHEBI:57705"/>
    </ligand>
</feature>
<feature type="binding site" evidence="1">
    <location>
        <position position="377"/>
    </location>
    <ligand>
        <name>acetyl-CoA</name>
        <dbReference type="ChEBI" id="CHEBI:57288"/>
    </ligand>
</feature>
<feature type="binding site" evidence="1">
    <location>
        <begin position="383"/>
        <end position="384"/>
    </location>
    <ligand>
        <name>acetyl-CoA</name>
        <dbReference type="ChEBI" id="CHEBI:57288"/>
    </ligand>
</feature>
<feature type="binding site" evidence="1">
    <location>
        <position position="402"/>
    </location>
    <ligand>
        <name>acetyl-CoA</name>
        <dbReference type="ChEBI" id="CHEBI:57288"/>
    </ligand>
</feature>
<feature type="binding site" evidence="1">
    <location>
        <position position="420"/>
    </location>
    <ligand>
        <name>acetyl-CoA</name>
        <dbReference type="ChEBI" id="CHEBI:57288"/>
    </ligand>
</feature>
<feature type="binding site" evidence="1">
    <location>
        <position position="437"/>
    </location>
    <ligand>
        <name>acetyl-CoA</name>
        <dbReference type="ChEBI" id="CHEBI:57288"/>
    </ligand>
</feature>
<feature type="sequence conflict" description="In Ref. 2; ACI49809." evidence="2" ref="2">
    <original>T</original>
    <variation>S</variation>
    <location>
        <position position="105"/>
    </location>
</feature>
<feature type="sequence conflict" description="In Ref. 2; ACI49809." evidence="2" ref="2">
    <original>AD</original>
    <variation>VA</variation>
    <location>
        <begin position="120"/>
        <end position="121"/>
    </location>
</feature>
<feature type="sequence conflict" description="In Ref. 2; ACI49809." evidence="2" ref="2">
    <original>NS</original>
    <variation>GN</variation>
    <location>
        <begin position="135"/>
        <end position="136"/>
    </location>
</feature>
<feature type="sequence conflict" description="In Ref. 2; ACI49809." evidence="2" ref="2">
    <original>D</original>
    <variation>E</variation>
    <location>
        <position position="393"/>
    </location>
</feature>
<feature type="sequence conflict" description="In Ref. 2; ACI49809." evidence="2" ref="2">
    <original>S</original>
    <variation>R</variation>
    <location>
        <position position="411"/>
    </location>
</feature>
<feature type="sequence conflict" description="In Ref. 2; ACI49809." evidence="2" ref="2">
    <original>L</original>
    <variation>P</variation>
    <location>
        <position position="429"/>
    </location>
</feature>